<feature type="chain" id="PRO_0000279722" description="Homeobox protein vent1">
    <location>
        <begin position="1"/>
        <end position="264"/>
    </location>
</feature>
<feature type="DNA-binding region" description="Homeobox" evidence="1">
    <location>
        <begin position="129"/>
        <end position="188"/>
    </location>
</feature>
<feature type="region of interest" description="Disordered" evidence="2">
    <location>
        <begin position="16"/>
        <end position="140"/>
    </location>
</feature>
<feature type="compositionally biased region" description="Basic and acidic residues" evidence="2">
    <location>
        <begin position="16"/>
        <end position="26"/>
    </location>
</feature>
<feature type="compositionally biased region" description="Basic and acidic residues" evidence="2">
    <location>
        <begin position="44"/>
        <end position="59"/>
    </location>
</feature>
<feature type="compositionally biased region" description="Polar residues" evidence="2">
    <location>
        <begin position="60"/>
        <end position="80"/>
    </location>
</feature>
<feature type="compositionally biased region" description="Basic and acidic residues" evidence="2">
    <location>
        <begin position="117"/>
        <end position="130"/>
    </location>
</feature>
<evidence type="ECO:0000255" key="1">
    <source>
        <dbReference type="PROSITE-ProRule" id="PRU00108"/>
    </source>
</evidence>
<evidence type="ECO:0000256" key="2">
    <source>
        <dbReference type="SAM" id="MobiDB-lite"/>
    </source>
</evidence>
<evidence type="ECO:0000269" key="3">
    <source>
    </source>
</evidence>
<evidence type="ECO:0000269" key="4">
    <source>
    </source>
</evidence>
<evidence type="ECO:0000269" key="5">
    <source>
    </source>
</evidence>
<evidence type="ECO:0000269" key="6">
    <source>
    </source>
</evidence>
<evidence type="ECO:0000303" key="7">
    <source>
    </source>
</evidence>
<evidence type="ECO:0000305" key="8"/>
<evidence type="ECO:0000312" key="9">
    <source>
        <dbReference type="EMBL" id="CAA63437.1"/>
    </source>
</evidence>
<organism>
    <name type="scientific">Xenopus laevis</name>
    <name type="common">African clawed frog</name>
    <dbReference type="NCBI Taxonomy" id="8355"/>
    <lineage>
        <taxon>Eukaryota</taxon>
        <taxon>Metazoa</taxon>
        <taxon>Chordata</taxon>
        <taxon>Craniata</taxon>
        <taxon>Vertebrata</taxon>
        <taxon>Euteleostomi</taxon>
        <taxon>Amphibia</taxon>
        <taxon>Batrachia</taxon>
        <taxon>Anura</taxon>
        <taxon>Pipoidea</taxon>
        <taxon>Pipidae</taxon>
        <taxon>Xenopodinae</taxon>
        <taxon>Xenopus</taxon>
        <taxon>Xenopus</taxon>
    </lineage>
</organism>
<name>VENT1_XENLA</name>
<proteinExistence type="evidence at protein level"/>
<reference evidence="8 9" key="1">
    <citation type="journal article" date="1995" name="EMBO J.">
        <title>Antagonizing the Spemann organizer: role of the homeobox gene Xvent-1.</title>
        <authorList>
            <person name="Gawantka V."/>
            <person name="Delius H."/>
            <person name="Hirschfeld K."/>
            <person name="Blumenstock C."/>
            <person name="Niehrs C."/>
        </authorList>
    </citation>
    <scope>NUCLEOTIDE SEQUENCE [MRNA]</scope>
    <scope>FUNCTION</scope>
    <scope>TISSUE SPECIFICITY</scope>
    <scope>DEVELOPMENTAL STAGE</scope>
    <scope>INDUCTION</scope>
    <source>
        <tissue evidence="4">Embryo</tissue>
    </source>
</reference>
<reference evidence="8" key="2">
    <citation type="journal article" date="1998" name="Development">
        <title>Requirement for Xvent-1 and Xvent-2 gene function in dorsoventral patterning of Xenopus mesoderm.</title>
        <authorList>
            <person name="Onichtchouk D."/>
            <person name="Glinka A."/>
            <person name="Niehrs C."/>
        </authorList>
    </citation>
    <scope>FUNCTION</scope>
</reference>
<reference evidence="8" key="3">
    <citation type="journal article" date="1998" name="EMBO J.">
        <title>Xvent-1 mediates BMP-4-induced suppression of the dorsal-lip-specific early response gene XFD-1' in Xenopus embryos.</title>
        <authorList>
            <person name="Friedle H."/>
            <person name="Rastegar S."/>
            <person name="Paul H."/>
            <person name="Kaufmann E."/>
            <person name="Knoechel W."/>
        </authorList>
    </citation>
    <scope>FUNCTION</scope>
    <scope>DNA-BINDING</scope>
    <scope>DOMAIN</scope>
</reference>
<reference evidence="8" key="4">
    <citation type="journal article" date="2002" name="Development">
        <title>A study of mesoderm patterning through the analysis of the regulation of Xmyf-5 expression.</title>
        <authorList>
            <person name="Polli M."/>
            <person name="Amaya E."/>
        </authorList>
    </citation>
    <scope>FUNCTION</scope>
    <scope>DNA-BINDING</scope>
</reference>
<dbReference type="EMBL" id="X92851">
    <property type="protein sequence ID" value="CAA63437.1"/>
    <property type="molecule type" value="mRNA"/>
</dbReference>
<dbReference type="PIR" id="S66151">
    <property type="entry name" value="S66151"/>
</dbReference>
<dbReference type="RefSeq" id="NP_001091390.1">
    <property type="nucleotide sequence ID" value="NM_001097921.1"/>
</dbReference>
<dbReference type="SMR" id="Q91926"/>
<dbReference type="GeneID" id="100037246"/>
<dbReference type="KEGG" id="xla:100037246"/>
<dbReference type="AGR" id="Xenbase:XB-GENE-920881"/>
<dbReference type="CTD" id="100037246"/>
<dbReference type="Xenbase" id="XB-GENE-920881">
    <property type="gene designation" value="ventx1.2.S"/>
</dbReference>
<dbReference type="OrthoDB" id="6159439at2759"/>
<dbReference type="Proteomes" id="UP000186698">
    <property type="component" value="Chromosome 7S"/>
</dbReference>
<dbReference type="Bgee" id="100037246">
    <property type="expression patterns" value="Expressed in gastrula and 2 other cell types or tissues"/>
</dbReference>
<dbReference type="GO" id="GO:0005634">
    <property type="term" value="C:nucleus"/>
    <property type="evidence" value="ECO:0000318"/>
    <property type="project" value="GO_Central"/>
</dbReference>
<dbReference type="GO" id="GO:0000981">
    <property type="term" value="F:DNA-binding transcription factor activity, RNA polymerase II-specific"/>
    <property type="evidence" value="ECO:0000318"/>
    <property type="project" value="GO_Central"/>
</dbReference>
<dbReference type="GO" id="GO:0000978">
    <property type="term" value="F:RNA polymerase II cis-regulatory region sequence-specific DNA binding"/>
    <property type="evidence" value="ECO:0000318"/>
    <property type="project" value="GO_Central"/>
</dbReference>
<dbReference type="GO" id="GO:0043565">
    <property type="term" value="F:sequence-specific DNA binding"/>
    <property type="evidence" value="ECO:0000314"/>
    <property type="project" value="UniProtKB"/>
</dbReference>
<dbReference type="GO" id="GO:0030509">
    <property type="term" value="P:BMP signaling pathway"/>
    <property type="evidence" value="ECO:0000315"/>
    <property type="project" value="UniProtKB"/>
</dbReference>
<dbReference type="GO" id="GO:0030154">
    <property type="term" value="P:cell differentiation"/>
    <property type="evidence" value="ECO:0000318"/>
    <property type="project" value="GO_Central"/>
</dbReference>
<dbReference type="GO" id="GO:0048264">
    <property type="term" value="P:determination of ventral identity"/>
    <property type="evidence" value="ECO:0000315"/>
    <property type="project" value="UniProtKB"/>
</dbReference>
<dbReference type="GO" id="GO:0001707">
    <property type="term" value="P:mesoderm formation"/>
    <property type="evidence" value="ECO:0000315"/>
    <property type="project" value="UniProtKB"/>
</dbReference>
<dbReference type="GO" id="GO:0045892">
    <property type="term" value="P:negative regulation of DNA-templated transcription"/>
    <property type="evidence" value="ECO:0000315"/>
    <property type="project" value="UniProtKB"/>
</dbReference>
<dbReference type="GO" id="GO:0000122">
    <property type="term" value="P:negative regulation of transcription by RNA polymerase II"/>
    <property type="evidence" value="ECO:0000315"/>
    <property type="project" value="UniProtKB"/>
</dbReference>
<dbReference type="GO" id="GO:0006357">
    <property type="term" value="P:regulation of transcription by RNA polymerase II"/>
    <property type="evidence" value="ECO:0000318"/>
    <property type="project" value="GO_Central"/>
</dbReference>
<dbReference type="CDD" id="cd00086">
    <property type="entry name" value="homeodomain"/>
    <property type="match status" value="1"/>
</dbReference>
<dbReference type="FunFam" id="1.10.10.60:FF:000451">
    <property type="entry name" value="Homeobox protein vent1"/>
    <property type="match status" value="1"/>
</dbReference>
<dbReference type="Gene3D" id="1.10.10.60">
    <property type="entry name" value="Homeodomain-like"/>
    <property type="match status" value="1"/>
</dbReference>
<dbReference type="InterPro" id="IPR001356">
    <property type="entry name" value="HD"/>
</dbReference>
<dbReference type="InterPro" id="IPR020479">
    <property type="entry name" value="HD_metazoa"/>
</dbReference>
<dbReference type="InterPro" id="IPR017970">
    <property type="entry name" value="Homeobox_CS"/>
</dbReference>
<dbReference type="InterPro" id="IPR050394">
    <property type="entry name" value="Homeobox_NK-like"/>
</dbReference>
<dbReference type="InterPro" id="IPR009057">
    <property type="entry name" value="Homeodomain-like_sf"/>
</dbReference>
<dbReference type="PANTHER" id="PTHR24340">
    <property type="entry name" value="HOMEOBOX PROTEIN NKX"/>
    <property type="match status" value="1"/>
</dbReference>
<dbReference type="PANTHER" id="PTHR24340:SF112">
    <property type="entry name" value="VENT HOMEOBOX"/>
    <property type="match status" value="1"/>
</dbReference>
<dbReference type="Pfam" id="PF00046">
    <property type="entry name" value="Homeodomain"/>
    <property type="match status" value="1"/>
</dbReference>
<dbReference type="PRINTS" id="PR00024">
    <property type="entry name" value="HOMEOBOX"/>
</dbReference>
<dbReference type="SMART" id="SM00389">
    <property type="entry name" value="HOX"/>
    <property type="match status" value="1"/>
</dbReference>
<dbReference type="SUPFAM" id="SSF46689">
    <property type="entry name" value="Homeodomain-like"/>
    <property type="match status" value="1"/>
</dbReference>
<dbReference type="PROSITE" id="PS00027">
    <property type="entry name" value="HOMEOBOX_1"/>
    <property type="match status" value="1"/>
</dbReference>
<dbReference type="PROSITE" id="PS50071">
    <property type="entry name" value="HOMEOBOX_2"/>
    <property type="match status" value="1"/>
</dbReference>
<accession>Q91926</accession>
<protein>
    <recommendedName>
        <fullName>Homeobox protein vent1</fullName>
        <shortName>Xvent-1</shortName>
    </recommendedName>
</protein>
<keyword id="KW-0217">Developmental protein</keyword>
<keyword id="KW-0238">DNA-binding</keyword>
<keyword id="KW-0371">Homeobox</keyword>
<keyword id="KW-0539">Nucleus</keyword>
<keyword id="KW-1185">Reference proteome</keyword>
<keyword id="KW-0804">Transcription</keyword>
<keyword id="KW-0805">Transcription regulation</keyword>
<gene>
    <name type="primary">vent1</name>
    <name evidence="7" type="synonym">vent-1</name>
</gene>
<sequence length="264" mass="29978">MVQQGFSIDLILARSKEEATDGKDSMSSRPHIPCAPQPLPPTKYAKEMPRKKDGQDVQEHTTSFQCSLGEQVINRPSANPSLAAMHRSSGSSDEFSPPGSEDDSTESSGRSSQENDTEQREKSPKSDLQRRLRTAFTPQQISKLEQAFNKQRYLGAPERKKLATSLQLSEIQVKTWFQNRRMKLKRQIQDKQHSLVPPPVCYPQTFPYYPGGFPVPLNSGSFYQPRALPFQAPQHSYIPQPLHHHVRMSSHQEQYPPLFGAQYM</sequence>
<comment type="function">
    <text evidence="3 4 5 6">Transcriptional repressor. Cooperates with vent2 in a ventral signaling pathway downstream of bmp4, which antagonizes the Spemann organizer and dorsal mesoderm formation, and leads to ventral mesoderm formation. Acts downstream of bmp4 to repress transcription of foxa4-B/XFD-1'. Binds to DNA with preference for the target sequence 5'-CTATT[T/C]G-3'. Also binds 5'-TGCATTTTG-3' at a lower frequency, and occasionally 5'-TTGATC-3'. Binds to the homeobox 2 (HBX2) repressor element in the promoter of the myf5 gene and represses myf5 transcription in the ventral domain.</text>
</comment>
<comment type="subcellular location">
    <subcellularLocation>
        <location evidence="8">Nucleus</location>
    </subcellularLocation>
</comment>
<comment type="tissue specificity">
    <text evidence="4">Expressed in the ventral marginal zone of gastrulae. At stage 11.5, also expressed in the ventral region of the animal cap (ectoderm). At the end of gastrulation, predominantly localized to the ventral and lateral regions of the closing slit blastopore. At early tail bud stage, expression is maintained only in the forming proctodeum.</text>
</comment>
<comment type="developmental stage">
    <text evidence="4">Expression begins in the late blastula, peaks at state 11 (early gastrula) and decreases thereafter.</text>
</comment>
<comment type="induction">
    <text evidence="4">By bmp4. Suppressed by gsc, acting in a negative cross-regulatory loop.</text>
</comment>
<comment type="domain">
    <text evidence="6">The N-terminal region is required for repressor function.</text>
</comment>